<keyword id="KW-0046">Antibiotic resistance</keyword>
<keyword id="KW-0997">Cell inner membrane</keyword>
<keyword id="KW-1003">Cell membrane</keyword>
<keyword id="KW-0133">Cell shape</keyword>
<keyword id="KW-0961">Cell wall biogenesis/degradation</keyword>
<keyword id="KW-0378">Hydrolase</keyword>
<keyword id="KW-0472">Membrane</keyword>
<keyword id="KW-0573">Peptidoglycan synthesis</keyword>
<keyword id="KW-1185">Reference proteome</keyword>
<keyword id="KW-0812">Transmembrane</keyword>
<keyword id="KW-1133">Transmembrane helix</keyword>
<organism>
    <name type="scientific">Aliivibrio fischeri (strain ATCC 700601 / ES114)</name>
    <name type="common">Vibrio fischeri</name>
    <dbReference type="NCBI Taxonomy" id="312309"/>
    <lineage>
        <taxon>Bacteria</taxon>
        <taxon>Pseudomonadati</taxon>
        <taxon>Pseudomonadota</taxon>
        <taxon>Gammaproteobacteria</taxon>
        <taxon>Vibrionales</taxon>
        <taxon>Vibrionaceae</taxon>
        <taxon>Aliivibrio</taxon>
    </lineage>
</organism>
<sequence length="267" mass="29424">MTYFEAFFLALLQGFTEFLPISSSAHLILPSAILGWSDQGLAFDVAVHVGTLAAVVIYFRKEVVTLLTAWVGSIVKKEHNKESNLAWLIVLATIPAALFGLLFKDFIEIYLRSAWVIAATTIVFGLLLWWVDKNATLAKDEYQMTWKKALFLGIAQAMAMIPGTSRSGITITAALYLGFTREAAARFSFLMSIPIITLAGSYLGLKLAMSDISIHLGLLSTGVIVSFISAYICIHFFLKLISSMGMMPFVIYRILLGSSLLVWLALH</sequence>
<name>UPPP_ALIF1</name>
<feature type="chain" id="PRO_0000151235" description="Undecaprenyl-diphosphatase">
    <location>
        <begin position="1"/>
        <end position="267"/>
    </location>
</feature>
<feature type="transmembrane region" description="Helical" evidence="1">
    <location>
        <begin position="1"/>
        <end position="21"/>
    </location>
</feature>
<feature type="transmembrane region" description="Helical" evidence="1">
    <location>
        <begin position="39"/>
        <end position="59"/>
    </location>
</feature>
<feature type="transmembrane region" description="Helical" evidence="1">
    <location>
        <begin position="83"/>
        <end position="103"/>
    </location>
</feature>
<feature type="transmembrane region" description="Helical" evidence="1">
    <location>
        <begin position="111"/>
        <end position="131"/>
    </location>
</feature>
<feature type="transmembrane region" description="Helical" evidence="1">
    <location>
        <begin position="149"/>
        <end position="169"/>
    </location>
</feature>
<feature type="transmembrane region" description="Helical" evidence="1">
    <location>
        <begin position="189"/>
        <end position="209"/>
    </location>
</feature>
<feature type="transmembrane region" description="Helical" evidence="1">
    <location>
        <begin position="218"/>
        <end position="238"/>
    </location>
</feature>
<feature type="transmembrane region" description="Helical" evidence="1">
    <location>
        <begin position="246"/>
        <end position="266"/>
    </location>
</feature>
<evidence type="ECO:0000255" key="1">
    <source>
        <dbReference type="HAMAP-Rule" id="MF_01006"/>
    </source>
</evidence>
<dbReference type="EC" id="3.6.1.27" evidence="1"/>
<dbReference type="EMBL" id="CP000020">
    <property type="protein sequence ID" value="AAW86740.1"/>
    <property type="molecule type" value="Genomic_DNA"/>
</dbReference>
<dbReference type="RefSeq" id="WP_011262664.1">
    <property type="nucleotide sequence ID" value="NC_006840.2"/>
</dbReference>
<dbReference type="RefSeq" id="YP_205628.1">
    <property type="nucleotide sequence ID" value="NC_006840.2"/>
</dbReference>
<dbReference type="SMR" id="Q5E2K6"/>
<dbReference type="STRING" id="312309.VF_2245"/>
<dbReference type="EnsemblBacteria" id="AAW86740">
    <property type="protein sequence ID" value="AAW86740"/>
    <property type="gene ID" value="VF_2245"/>
</dbReference>
<dbReference type="GeneID" id="54164961"/>
<dbReference type="KEGG" id="vfi:VF_2245"/>
<dbReference type="PATRIC" id="fig|312309.11.peg.2283"/>
<dbReference type="eggNOG" id="COG1968">
    <property type="taxonomic scope" value="Bacteria"/>
</dbReference>
<dbReference type="HOGENOM" id="CLU_060296_1_0_6"/>
<dbReference type="OrthoDB" id="9808289at2"/>
<dbReference type="Proteomes" id="UP000000537">
    <property type="component" value="Chromosome I"/>
</dbReference>
<dbReference type="GO" id="GO:0005886">
    <property type="term" value="C:plasma membrane"/>
    <property type="evidence" value="ECO:0007669"/>
    <property type="project" value="UniProtKB-SubCell"/>
</dbReference>
<dbReference type="GO" id="GO:0050380">
    <property type="term" value="F:undecaprenyl-diphosphatase activity"/>
    <property type="evidence" value="ECO:0007669"/>
    <property type="project" value="UniProtKB-UniRule"/>
</dbReference>
<dbReference type="GO" id="GO:0071555">
    <property type="term" value="P:cell wall organization"/>
    <property type="evidence" value="ECO:0007669"/>
    <property type="project" value="UniProtKB-KW"/>
</dbReference>
<dbReference type="GO" id="GO:0009252">
    <property type="term" value="P:peptidoglycan biosynthetic process"/>
    <property type="evidence" value="ECO:0007669"/>
    <property type="project" value="UniProtKB-KW"/>
</dbReference>
<dbReference type="GO" id="GO:0008360">
    <property type="term" value="P:regulation of cell shape"/>
    <property type="evidence" value="ECO:0007669"/>
    <property type="project" value="UniProtKB-KW"/>
</dbReference>
<dbReference type="GO" id="GO:0046677">
    <property type="term" value="P:response to antibiotic"/>
    <property type="evidence" value="ECO:0007669"/>
    <property type="project" value="UniProtKB-UniRule"/>
</dbReference>
<dbReference type="HAMAP" id="MF_01006">
    <property type="entry name" value="Undec_diphosphatase"/>
    <property type="match status" value="1"/>
</dbReference>
<dbReference type="InterPro" id="IPR003824">
    <property type="entry name" value="UppP"/>
</dbReference>
<dbReference type="NCBIfam" id="NF001393">
    <property type="entry name" value="PRK00281.2-4"/>
    <property type="match status" value="1"/>
</dbReference>
<dbReference type="NCBIfam" id="TIGR00753">
    <property type="entry name" value="undec_PP_bacA"/>
    <property type="match status" value="1"/>
</dbReference>
<dbReference type="PANTHER" id="PTHR30622">
    <property type="entry name" value="UNDECAPRENYL-DIPHOSPHATASE"/>
    <property type="match status" value="1"/>
</dbReference>
<dbReference type="PANTHER" id="PTHR30622:SF4">
    <property type="entry name" value="UNDECAPRENYL-DIPHOSPHATASE"/>
    <property type="match status" value="1"/>
</dbReference>
<dbReference type="Pfam" id="PF02673">
    <property type="entry name" value="BacA"/>
    <property type="match status" value="1"/>
</dbReference>
<reference key="1">
    <citation type="journal article" date="2005" name="Proc. Natl. Acad. Sci. U.S.A.">
        <title>Complete genome sequence of Vibrio fischeri: a symbiotic bacterium with pathogenic congeners.</title>
        <authorList>
            <person name="Ruby E.G."/>
            <person name="Urbanowski M."/>
            <person name="Campbell J."/>
            <person name="Dunn A."/>
            <person name="Faini M."/>
            <person name="Gunsalus R."/>
            <person name="Lostroh P."/>
            <person name="Lupp C."/>
            <person name="McCann J."/>
            <person name="Millikan D."/>
            <person name="Schaefer A."/>
            <person name="Stabb E."/>
            <person name="Stevens A."/>
            <person name="Visick K."/>
            <person name="Whistler C."/>
            <person name="Greenberg E.P."/>
        </authorList>
    </citation>
    <scope>NUCLEOTIDE SEQUENCE [LARGE SCALE GENOMIC DNA]</scope>
    <source>
        <strain>ATCC 700601 / ES114</strain>
    </source>
</reference>
<protein>
    <recommendedName>
        <fullName evidence="1">Undecaprenyl-diphosphatase</fullName>
        <ecNumber evidence="1">3.6.1.27</ecNumber>
    </recommendedName>
    <alternativeName>
        <fullName evidence="1">Bacitracin resistance protein</fullName>
    </alternativeName>
    <alternativeName>
        <fullName evidence="1">Undecaprenyl pyrophosphate phosphatase</fullName>
    </alternativeName>
</protein>
<accession>Q5E2K6</accession>
<gene>
    <name evidence="1" type="primary">uppP</name>
    <name type="ordered locus">VF_2245</name>
</gene>
<comment type="function">
    <text evidence="1">Catalyzes the dephosphorylation of undecaprenyl diphosphate (UPP). Confers resistance to bacitracin.</text>
</comment>
<comment type="catalytic activity">
    <reaction evidence="1">
        <text>di-trans,octa-cis-undecaprenyl diphosphate + H2O = di-trans,octa-cis-undecaprenyl phosphate + phosphate + H(+)</text>
        <dbReference type="Rhea" id="RHEA:28094"/>
        <dbReference type="ChEBI" id="CHEBI:15377"/>
        <dbReference type="ChEBI" id="CHEBI:15378"/>
        <dbReference type="ChEBI" id="CHEBI:43474"/>
        <dbReference type="ChEBI" id="CHEBI:58405"/>
        <dbReference type="ChEBI" id="CHEBI:60392"/>
        <dbReference type="EC" id="3.6.1.27"/>
    </reaction>
</comment>
<comment type="subcellular location">
    <subcellularLocation>
        <location evidence="1">Cell inner membrane</location>
        <topology evidence="1">Multi-pass membrane protein</topology>
    </subcellularLocation>
</comment>
<comment type="miscellaneous">
    <text>Bacitracin is thought to be involved in the inhibition of peptidoglycan synthesis by sequestering undecaprenyl diphosphate, thereby reducing the pool of lipid carrier available.</text>
</comment>
<comment type="similarity">
    <text evidence="1">Belongs to the UppP family.</text>
</comment>
<proteinExistence type="inferred from homology"/>